<reference key="1">
    <citation type="journal article" date="2005" name="Nature">
        <title>The genome of the social amoeba Dictyostelium discoideum.</title>
        <authorList>
            <person name="Eichinger L."/>
            <person name="Pachebat J.A."/>
            <person name="Gloeckner G."/>
            <person name="Rajandream M.A."/>
            <person name="Sucgang R."/>
            <person name="Berriman M."/>
            <person name="Song J."/>
            <person name="Olsen R."/>
            <person name="Szafranski K."/>
            <person name="Xu Q."/>
            <person name="Tunggal B."/>
            <person name="Kummerfeld S."/>
            <person name="Madera M."/>
            <person name="Konfortov B.A."/>
            <person name="Rivero F."/>
            <person name="Bankier A.T."/>
            <person name="Lehmann R."/>
            <person name="Hamlin N."/>
            <person name="Davies R."/>
            <person name="Gaudet P."/>
            <person name="Fey P."/>
            <person name="Pilcher K."/>
            <person name="Chen G."/>
            <person name="Saunders D."/>
            <person name="Sodergren E.J."/>
            <person name="Davis P."/>
            <person name="Kerhornou A."/>
            <person name="Nie X."/>
            <person name="Hall N."/>
            <person name="Anjard C."/>
            <person name="Hemphill L."/>
            <person name="Bason N."/>
            <person name="Farbrother P."/>
            <person name="Desany B."/>
            <person name="Just E."/>
            <person name="Morio T."/>
            <person name="Rost R."/>
            <person name="Churcher C.M."/>
            <person name="Cooper J."/>
            <person name="Haydock S."/>
            <person name="van Driessche N."/>
            <person name="Cronin A."/>
            <person name="Goodhead I."/>
            <person name="Muzny D.M."/>
            <person name="Mourier T."/>
            <person name="Pain A."/>
            <person name="Lu M."/>
            <person name="Harper D."/>
            <person name="Lindsay R."/>
            <person name="Hauser H."/>
            <person name="James K.D."/>
            <person name="Quiles M."/>
            <person name="Madan Babu M."/>
            <person name="Saito T."/>
            <person name="Buchrieser C."/>
            <person name="Wardroper A."/>
            <person name="Felder M."/>
            <person name="Thangavelu M."/>
            <person name="Johnson D."/>
            <person name="Knights A."/>
            <person name="Loulseged H."/>
            <person name="Mungall K.L."/>
            <person name="Oliver K."/>
            <person name="Price C."/>
            <person name="Quail M.A."/>
            <person name="Urushihara H."/>
            <person name="Hernandez J."/>
            <person name="Rabbinowitsch E."/>
            <person name="Steffen D."/>
            <person name="Sanders M."/>
            <person name="Ma J."/>
            <person name="Kohara Y."/>
            <person name="Sharp S."/>
            <person name="Simmonds M.N."/>
            <person name="Spiegler S."/>
            <person name="Tivey A."/>
            <person name="Sugano S."/>
            <person name="White B."/>
            <person name="Walker D."/>
            <person name="Woodward J.R."/>
            <person name="Winckler T."/>
            <person name="Tanaka Y."/>
            <person name="Shaulsky G."/>
            <person name="Schleicher M."/>
            <person name="Weinstock G.M."/>
            <person name="Rosenthal A."/>
            <person name="Cox E.C."/>
            <person name="Chisholm R.L."/>
            <person name="Gibbs R.A."/>
            <person name="Loomis W.F."/>
            <person name="Platzer M."/>
            <person name="Kay R.R."/>
            <person name="Williams J.G."/>
            <person name="Dear P.H."/>
            <person name="Noegel A.A."/>
            <person name="Barrell B.G."/>
            <person name="Kuspa A."/>
        </authorList>
    </citation>
    <scope>NUCLEOTIDE SEQUENCE [LARGE SCALE GENOMIC DNA]</scope>
    <source>
        <strain>AX4</strain>
    </source>
</reference>
<reference evidence="5" key="2">
    <citation type="journal article" date="2014" name="Elife">
        <title>Characterization of TSET, an ancient and widespread membrane trafficking complex.</title>
        <authorList>
            <person name="Hirst J."/>
            <person name="Schlacht A."/>
            <person name="Norcott J.P."/>
            <person name="Traynor D."/>
            <person name="Bloomfield G."/>
            <person name="Antrobus R."/>
            <person name="Kay R.R."/>
            <person name="Dacks J.B."/>
            <person name="Robinson M.S."/>
        </authorList>
    </citation>
    <scope>IDENTIFICATION IN THE TSET COMPLEX</scope>
    <scope>IDENTIFICATION BY MASS SPECTROMETRY</scope>
</reference>
<accession>Q54YB3</accession>
<organism>
    <name type="scientific">Dictyostelium discoideum</name>
    <name type="common">Social amoeba</name>
    <dbReference type="NCBI Taxonomy" id="44689"/>
    <lineage>
        <taxon>Eukaryota</taxon>
        <taxon>Amoebozoa</taxon>
        <taxon>Evosea</taxon>
        <taxon>Eumycetozoa</taxon>
        <taxon>Dictyostelia</taxon>
        <taxon>Dictyosteliales</taxon>
        <taxon>Dictyosteliaceae</taxon>
        <taxon>Dictyostelium</taxon>
    </lineage>
</organism>
<keyword id="KW-0677">Repeat</keyword>
<keyword id="KW-0853">WD repeat</keyword>
<protein>
    <recommendedName>
        <fullName evidence="5">TSET complex member tstE</fullName>
    </recommendedName>
    <alternativeName>
        <fullName evidence="4">Protein TTRAY1</fullName>
    </alternativeName>
</protein>
<comment type="subunit">
    <text evidence="3">Component of the TSET complex, a heterohexamer composed of tstA, tstB, tstC, tstD, tstE and tstF, which may act in plasma membrane turnover. tstA, tstB, tstC and tstD are likely to be the core complex members with tstE and tstF acting as associated scaffold proteins.</text>
</comment>
<gene>
    <name evidence="4" type="primary">tstE</name>
    <name evidence="6" type="ORF">DDB0218088</name>
</gene>
<dbReference type="EMBL" id="AAFI01000052">
    <property type="protein sequence ID" value="EAL68503.1"/>
    <property type="molecule type" value="Genomic_DNA"/>
</dbReference>
<dbReference type="RefSeq" id="XP_642289.1">
    <property type="nucleotide sequence ID" value="XM_637197.1"/>
</dbReference>
<dbReference type="SMR" id="Q54YB3"/>
<dbReference type="STRING" id="44689.Q54YB3"/>
<dbReference type="PaxDb" id="44689-DDB0233463"/>
<dbReference type="KEGG" id="ddi:DDB_G0278661"/>
<dbReference type="dictyBase" id="DDB_G0278661">
    <property type="gene designation" value="tstE"/>
</dbReference>
<dbReference type="VEuPathDB" id="AmoebaDB:DDB_G0278661"/>
<dbReference type="eggNOG" id="ENOG502RF6X">
    <property type="taxonomic scope" value="Eukaryota"/>
</dbReference>
<dbReference type="HOGENOM" id="CLU_258448_0_0_1"/>
<dbReference type="OMA" id="RECMNAG"/>
<dbReference type="PRO" id="PR:Q54YB3"/>
<dbReference type="Gene3D" id="2.130.10.10">
    <property type="entry name" value="YVTN repeat-like/Quinoprotein amine dehydrogenase"/>
    <property type="match status" value="1"/>
</dbReference>
<dbReference type="InterPro" id="IPR050844">
    <property type="entry name" value="Coatomer_complex_subunit"/>
</dbReference>
<dbReference type="InterPro" id="IPR015943">
    <property type="entry name" value="WD40/YVTN_repeat-like_dom_sf"/>
</dbReference>
<dbReference type="InterPro" id="IPR019775">
    <property type="entry name" value="WD40_repeat_CS"/>
</dbReference>
<dbReference type="InterPro" id="IPR036322">
    <property type="entry name" value="WD40_repeat_dom_sf"/>
</dbReference>
<dbReference type="InterPro" id="IPR001680">
    <property type="entry name" value="WD40_rpt"/>
</dbReference>
<dbReference type="PANTHER" id="PTHR19876">
    <property type="entry name" value="COATOMER"/>
    <property type="match status" value="1"/>
</dbReference>
<dbReference type="PANTHER" id="PTHR19876:SF1">
    <property type="entry name" value="COATOMER SUBUNIT ALPHA"/>
    <property type="match status" value="1"/>
</dbReference>
<dbReference type="Pfam" id="PF00400">
    <property type="entry name" value="WD40"/>
    <property type="match status" value="1"/>
</dbReference>
<dbReference type="SMART" id="SM00320">
    <property type="entry name" value="WD40"/>
    <property type="match status" value="2"/>
</dbReference>
<dbReference type="SUPFAM" id="SSF50978">
    <property type="entry name" value="WD40 repeat-like"/>
    <property type="match status" value="1"/>
</dbReference>
<dbReference type="PROSITE" id="PS00678">
    <property type="entry name" value="WD_REPEATS_1"/>
    <property type="match status" value="1"/>
</dbReference>
<dbReference type="PROSITE" id="PS50082">
    <property type="entry name" value="WD_REPEATS_2"/>
    <property type="match status" value="1"/>
</dbReference>
<dbReference type="PROSITE" id="PS50294">
    <property type="entry name" value="WD_REPEATS_REGION"/>
    <property type="match status" value="1"/>
</dbReference>
<feature type="chain" id="PRO_0000445762" description="TSET complex member tstE">
    <location>
        <begin position="1"/>
        <end position="1340"/>
    </location>
</feature>
<feature type="repeat" description="WD 1" evidence="1">
    <location>
        <begin position="208"/>
        <end position="246"/>
    </location>
</feature>
<feature type="repeat" description="WD 2" evidence="1">
    <location>
        <begin position="250"/>
        <end position="294"/>
    </location>
</feature>
<feature type="repeat" description="WD 3" evidence="1">
    <location>
        <begin position="345"/>
        <end position="384"/>
    </location>
</feature>
<feature type="repeat" description="WD 4" evidence="1">
    <location>
        <begin position="397"/>
        <end position="436"/>
    </location>
</feature>
<feature type="region of interest" description="Disordered" evidence="2">
    <location>
        <begin position="56"/>
        <end position="75"/>
    </location>
</feature>
<feature type="region of interest" description="Disordered" evidence="2">
    <location>
        <begin position="110"/>
        <end position="131"/>
    </location>
</feature>
<feature type="region of interest" description="Disordered" evidence="2">
    <location>
        <begin position="1216"/>
        <end position="1340"/>
    </location>
</feature>
<feature type="compositionally biased region" description="Low complexity" evidence="2">
    <location>
        <begin position="56"/>
        <end position="67"/>
    </location>
</feature>
<feature type="compositionally biased region" description="Polar residues" evidence="2">
    <location>
        <begin position="1216"/>
        <end position="1251"/>
    </location>
</feature>
<feature type="compositionally biased region" description="Acidic residues" evidence="2">
    <location>
        <begin position="1252"/>
        <end position="1275"/>
    </location>
</feature>
<feature type="compositionally biased region" description="Polar residues" evidence="2">
    <location>
        <begin position="1286"/>
        <end position="1318"/>
    </location>
</feature>
<feature type="compositionally biased region" description="Low complexity" evidence="2">
    <location>
        <begin position="1328"/>
        <end position="1340"/>
    </location>
</feature>
<name>TSTE_DICDI</name>
<proteinExistence type="evidence at protein level"/>
<sequence>MLKIGICSSITISNSISNSYHSPSTSTVVVGNQLQQQQQQQQYVQQQLQYQYDSLNQSQTSPNSNDGNIGGGSGGGNNAGSNIGIGGGGGGNNNNIGGGGGSGGGVNIGSGSGGGGSGSNSNIGGGGGGGQLGMNGMNGSNMLLINQNIPTIKSTDSIGSTVSINSTGVSLQYNSLSSTIGSPSSLSLLSPIISNPFSSTLPNQSYMVNQILFNCLCFHPKSPILYAAIRNEVHFYDIITKSVIGKLFIDPTETIRHLITLPGNSIQTPTFLLAFTQEGVIYLWDPETHKLQTIVHQLKLDDKRPITCKSAAPNKPVIFFSKNESKDIVVVDFHNKGSSPFKLKGHKKPISAIAHHPAKTILASCSTDGQLKIWDTRNNMSFLNFEEFSSYENTRNIEHSNHYFLVFEPTGKYLVMTGSSGLTLVYGDLTSQNPQEVIANGFICKGQNILSIVHHPQLPLFFVLSIGPSGYEELSSWEINNQYKTIVQSPLIPTFIPEINDSLSYLSKYSKPLTIPKFNPVSIVIHPTKNYFSLQLEASSNISSTISPYPSNINSQPFSSIRHINQNIYSINSYDHLNHSFPLVSKLPLPMGFFFEPENTFNYPSEITFFDGTYVKSYLPLNGITKKLIDTPIMVNSASGMGSGGGEDISKGKKFLFNNEFQLFALIYDSFSVAAQAQLSKYLIMDLQGLVNQQGDGSDCVFIGNNQQILILGLDGKLAKVATLSKQGVSSFKNFTLVPRITSVHSTPLGGNKVVLYFCQEKSCLVFSKNVNQSDPSCKDNYMVDIDGDNGILQLQPNEKVFQIEWQSDPKSSQHICAILTNQRIIITNSRLRIINQIHSPPNHHQSTSSYFQSIFWLEWTLLYTTSTHLMYMTLQNNQAPKPISTLSISPIILSTILPDRMIFGYQGLQVPGKNETTVRCQAIGILECLIIGLLSLPPFIQYEKKYLSSCLQNIVQKLDYTRISKHVLDKLRERSFTDLAYSLSNDMKISQSKQSSLEKFRMAWISKQYEAANRHLSIEFNRISIIKNPNDTEKRQFNKLKENMRDFGRECMNAGHYLLAKDCFQKLSEHIYLLQISILLNDRDSVIAIKRDAELRGDDHVLLAACDKYLNKQNKSINKVNPPVVKILPWDPTATTNVSMKSGLDYLSPINLNSIQRYYPISLPFSGASASLNGGKHKLLRPPEESWPPEDFKHSVAITPPRTLMSLVANRLSTKSHMSSTTTLRRSPSIENIRTTSTTFDSSKFNTDNQELFDDDSDDDSDSGADADVDSENEEDRKLVMTVPASLQHNDNSSLTNITVTDNDSNLDQDITSNTGSDIADLNDTQLSSTPTPTTTLSS</sequence>
<evidence type="ECO:0000255" key="1"/>
<evidence type="ECO:0000256" key="2">
    <source>
        <dbReference type="SAM" id="MobiDB-lite"/>
    </source>
</evidence>
<evidence type="ECO:0000269" key="3">
    <source>
    </source>
</evidence>
<evidence type="ECO:0000303" key="4">
    <source>
    </source>
</evidence>
<evidence type="ECO:0000305" key="5"/>
<evidence type="ECO:0000312" key="6">
    <source>
        <dbReference type="EMBL" id="EAL68503.1"/>
    </source>
</evidence>